<organism>
    <name type="scientific">Neisseria meningitidis serogroup A / serotype 4A (strain DSM 15465 / Z2491)</name>
    <dbReference type="NCBI Taxonomy" id="122587"/>
    <lineage>
        <taxon>Bacteria</taxon>
        <taxon>Pseudomonadati</taxon>
        <taxon>Pseudomonadota</taxon>
        <taxon>Betaproteobacteria</taxon>
        <taxon>Neisseriales</taxon>
        <taxon>Neisseriaceae</taxon>
        <taxon>Neisseria</taxon>
    </lineage>
</organism>
<proteinExistence type="inferred from homology"/>
<accession>Q9JWP0</accession>
<accession>A1IPB9</accession>
<reference key="1">
    <citation type="journal article" date="2000" name="Nature">
        <title>Complete DNA sequence of a serogroup A strain of Neisseria meningitidis Z2491.</title>
        <authorList>
            <person name="Parkhill J."/>
            <person name="Achtman M."/>
            <person name="James K.D."/>
            <person name="Bentley S.D."/>
            <person name="Churcher C.M."/>
            <person name="Klee S.R."/>
            <person name="Morelli G."/>
            <person name="Basham D."/>
            <person name="Brown D."/>
            <person name="Chillingworth T."/>
            <person name="Davies R.M."/>
            <person name="Davis P."/>
            <person name="Devlin K."/>
            <person name="Feltwell T."/>
            <person name="Hamlin N."/>
            <person name="Holroyd S."/>
            <person name="Jagels K."/>
            <person name="Leather S."/>
            <person name="Moule S."/>
            <person name="Mungall K.L."/>
            <person name="Quail M.A."/>
            <person name="Rajandream M.A."/>
            <person name="Rutherford K.M."/>
            <person name="Simmonds M."/>
            <person name="Skelton J."/>
            <person name="Whitehead S."/>
            <person name="Spratt B.G."/>
            <person name="Barrell B.G."/>
        </authorList>
    </citation>
    <scope>NUCLEOTIDE SEQUENCE [LARGE SCALE GENOMIC DNA]</scope>
    <source>
        <strain>DSM 15465 / Z2491</strain>
    </source>
</reference>
<sequence length="685" mass="76984">MTRKILVTSALPYANGSIHLGHMVEHIQTDVWVRFQKLRGNECHYCCADDTHGTPVMLAAQKQGIAPEDMIAKVREEHLADFTGFFIGYDNYYSTHSPENKQFSQDIYRALKANGKIESRVIEQLFDPEKQMFLPDRFVKGECPKCHAQDQYGDNCEVCGTTYSPTELINPYSAVSGAKPELRESEHFFFKLGECADFLKAWTSGNNPHDGKPHLQAEALNKMKEWLGEGEETTLSDWDISRDAPYFGFEIPDAPGKYFYVWLDAPVGYMASFKNLCDRIGVDFDEYFKADSQTEMYHFIGKDILYFHALFWPAMLHFSGHRAPTGVYAHGFLTVDGQKMSKSRGTFITAKSYLEQGLNPEWMRYYIAAKLNSKIEDIDLNLQDFISRVNSDLVGKYVNIAARASGFIAKRFEGRLKDVADSELLAKLTAQSEAIAECYESREYARALRDIMALADIVNEYVDANKPWELAKQEGQDARLHEVCSELINAFTMLTAYLAPVLPQTAANAAKFLNLEAITWANTRETLGKHAINKYEHLMQRVEQKQVDDLIEANKQSIQTTPAPAAEESQYEKVAEQASFDDFMKIDMRVAKVLNCEAVEGSTKLLKFDLDFGFEKRIIFSGIAASYPNPAELNGRMVIAVANFAPRKMAKFGVSEGMILSAATADGKLKLLDVDAGAQPGDKVG</sequence>
<comment type="function">
    <text evidence="1">Is required not only for elongation of protein synthesis but also for the initiation of all mRNA translation through initiator tRNA(fMet) aminoacylation.</text>
</comment>
<comment type="catalytic activity">
    <reaction evidence="1">
        <text>tRNA(Met) + L-methionine + ATP = L-methionyl-tRNA(Met) + AMP + diphosphate</text>
        <dbReference type="Rhea" id="RHEA:13481"/>
        <dbReference type="Rhea" id="RHEA-COMP:9667"/>
        <dbReference type="Rhea" id="RHEA-COMP:9698"/>
        <dbReference type="ChEBI" id="CHEBI:30616"/>
        <dbReference type="ChEBI" id="CHEBI:33019"/>
        <dbReference type="ChEBI" id="CHEBI:57844"/>
        <dbReference type="ChEBI" id="CHEBI:78442"/>
        <dbReference type="ChEBI" id="CHEBI:78530"/>
        <dbReference type="ChEBI" id="CHEBI:456215"/>
        <dbReference type="EC" id="6.1.1.10"/>
    </reaction>
</comment>
<comment type="cofactor">
    <cofactor evidence="1">
        <name>Zn(2+)</name>
        <dbReference type="ChEBI" id="CHEBI:29105"/>
    </cofactor>
    <text evidence="1">Binds 1 zinc ion per subunit.</text>
</comment>
<comment type="subunit">
    <text evidence="1">Homodimer.</text>
</comment>
<comment type="subcellular location">
    <subcellularLocation>
        <location evidence="1">Cytoplasm</location>
    </subcellularLocation>
</comment>
<comment type="similarity">
    <text evidence="1">Belongs to the class-I aminoacyl-tRNA synthetase family. MetG type 1 subfamily.</text>
</comment>
<gene>
    <name evidence="1" type="primary">metG</name>
    <name type="ordered locus">NMA0275</name>
</gene>
<feature type="chain" id="PRO_0000139145" description="Methionine--tRNA ligase">
    <location>
        <begin position="1"/>
        <end position="685"/>
    </location>
</feature>
<feature type="domain" description="tRNA-binding" evidence="1">
    <location>
        <begin position="582"/>
        <end position="685"/>
    </location>
</feature>
<feature type="short sequence motif" description="'HIGH' region">
    <location>
        <begin position="12"/>
        <end position="22"/>
    </location>
</feature>
<feature type="short sequence motif" description="'KMSKS' region">
    <location>
        <begin position="339"/>
        <end position="343"/>
    </location>
</feature>
<feature type="binding site" evidence="1">
    <location>
        <position position="143"/>
    </location>
    <ligand>
        <name>Zn(2+)</name>
        <dbReference type="ChEBI" id="CHEBI:29105"/>
    </ligand>
</feature>
<feature type="binding site" evidence="1">
    <location>
        <position position="146"/>
    </location>
    <ligand>
        <name>Zn(2+)</name>
        <dbReference type="ChEBI" id="CHEBI:29105"/>
    </ligand>
</feature>
<feature type="binding site" evidence="1">
    <location>
        <position position="156"/>
    </location>
    <ligand>
        <name>Zn(2+)</name>
        <dbReference type="ChEBI" id="CHEBI:29105"/>
    </ligand>
</feature>
<feature type="binding site" evidence="1">
    <location>
        <position position="159"/>
    </location>
    <ligand>
        <name>Zn(2+)</name>
        <dbReference type="ChEBI" id="CHEBI:29105"/>
    </ligand>
</feature>
<feature type="binding site" evidence="1">
    <location>
        <position position="342"/>
    </location>
    <ligand>
        <name>ATP</name>
        <dbReference type="ChEBI" id="CHEBI:30616"/>
    </ligand>
</feature>
<protein>
    <recommendedName>
        <fullName evidence="1">Methionine--tRNA ligase</fullName>
        <ecNumber evidence="1">6.1.1.10</ecNumber>
    </recommendedName>
    <alternativeName>
        <fullName evidence="1">Methionyl-tRNA synthetase</fullName>
        <shortName evidence="1">MetRS</shortName>
    </alternativeName>
</protein>
<evidence type="ECO:0000255" key="1">
    <source>
        <dbReference type="HAMAP-Rule" id="MF_00098"/>
    </source>
</evidence>
<name>SYM_NEIMA</name>
<dbReference type="EC" id="6.1.1.10" evidence="1"/>
<dbReference type="EMBL" id="AL157959">
    <property type="protein sequence ID" value="CAM07582.1"/>
    <property type="molecule type" value="Genomic_DNA"/>
</dbReference>
<dbReference type="PIR" id="G82022">
    <property type="entry name" value="G82022"/>
</dbReference>
<dbReference type="RefSeq" id="WP_010981066.1">
    <property type="nucleotide sequence ID" value="NC_003116.1"/>
</dbReference>
<dbReference type="SMR" id="Q9JWP0"/>
<dbReference type="EnsemblBacteria" id="CAM07582">
    <property type="protein sequence ID" value="CAM07582"/>
    <property type="gene ID" value="NMA0275"/>
</dbReference>
<dbReference type="KEGG" id="nma:NMA0275"/>
<dbReference type="HOGENOM" id="CLU_009710_7_0_4"/>
<dbReference type="Proteomes" id="UP000000626">
    <property type="component" value="Chromosome"/>
</dbReference>
<dbReference type="GO" id="GO:0005829">
    <property type="term" value="C:cytosol"/>
    <property type="evidence" value="ECO:0007669"/>
    <property type="project" value="TreeGrafter"/>
</dbReference>
<dbReference type="GO" id="GO:0005524">
    <property type="term" value="F:ATP binding"/>
    <property type="evidence" value="ECO:0007669"/>
    <property type="project" value="UniProtKB-UniRule"/>
</dbReference>
<dbReference type="GO" id="GO:0046872">
    <property type="term" value="F:metal ion binding"/>
    <property type="evidence" value="ECO:0007669"/>
    <property type="project" value="UniProtKB-KW"/>
</dbReference>
<dbReference type="GO" id="GO:0004825">
    <property type="term" value="F:methionine-tRNA ligase activity"/>
    <property type="evidence" value="ECO:0007669"/>
    <property type="project" value="UniProtKB-UniRule"/>
</dbReference>
<dbReference type="GO" id="GO:0000049">
    <property type="term" value="F:tRNA binding"/>
    <property type="evidence" value="ECO:0007669"/>
    <property type="project" value="UniProtKB-KW"/>
</dbReference>
<dbReference type="GO" id="GO:0006431">
    <property type="term" value="P:methionyl-tRNA aminoacylation"/>
    <property type="evidence" value="ECO:0007669"/>
    <property type="project" value="UniProtKB-UniRule"/>
</dbReference>
<dbReference type="CDD" id="cd07957">
    <property type="entry name" value="Anticodon_Ia_Met"/>
    <property type="match status" value="1"/>
</dbReference>
<dbReference type="CDD" id="cd00814">
    <property type="entry name" value="MetRS_core"/>
    <property type="match status" value="1"/>
</dbReference>
<dbReference type="CDD" id="cd02800">
    <property type="entry name" value="tRNA_bind_EcMetRS_like"/>
    <property type="match status" value="1"/>
</dbReference>
<dbReference type="FunFam" id="1.10.730.10:FF:000005">
    <property type="entry name" value="Methionine--tRNA ligase"/>
    <property type="match status" value="1"/>
</dbReference>
<dbReference type="FunFam" id="2.20.28.20:FF:000001">
    <property type="entry name" value="Methionine--tRNA ligase"/>
    <property type="match status" value="1"/>
</dbReference>
<dbReference type="FunFam" id="2.40.50.140:FF:000042">
    <property type="entry name" value="Methionine--tRNA ligase"/>
    <property type="match status" value="1"/>
</dbReference>
<dbReference type="Gene3D" id="3.40.50.620">
    <property type="entry name" value="HUPs"/>
    <property type="match status" value="1"/>
</dbReference>
<dbReference type="Gene3D" id="1.10.730.10">
    <property type="entry name" value="Isoleucyl-tRNA Synthetase, Domain 1"/>
    <property type="match status" value="1"/>
</dbReference>
<dbReference type="Gene3D" id="2.20.28.20">
    <property type="entry name" value="Methionyl-tRNA synthetase, Zn-domain"/>
    <property type="match status" value="1"/>
</dbReference>
<dbReference type="Gene3D" id="2.40.50.140">
    <property type="entry name" value="Nucleic acid-binding proteins"/>
    <property type="match status" value="1"/>
</dbReference>
<dbReference type="HAMAP" id="MF_00098">
    <property type="entry name" value="Met_tRNA_synth_type1"/>
    <property type="match status" value="1"/>
</dbReference>
<dbReference type="InterPro" id="IPR001412">
    <property type="entry name" value="aa-tRNA-synth_I_CS"/>
</dbReference>
<dbReference type="InterPro" id="IPR041872">
    <property type="entry name" value="Anticodon_Met"/>
</dbReference>
<dbReference type="InterPro" id="IPR004495">
    <property type="entry name" value="Met-tRNA-synth_bsu_C"/>
</dbReference>
<dbReference type="InterPro" id="IPR023458">
    <property type="entry name" value="Met-tRNA_ligase_1"/>
</dbReference>
<dbReference type="InterPro" id="IPR014758">
    <property type="entry name" value="Met-tRNA_synth"/>
</dbReference>
<dbReference type="InterPro" id="IPR015413">
    <property type="entry name" value="Methionyl/Leucyl_tRNA_Synth"/>
</dbReference>
<dbReference type="InterPro" id="IPR033911">
    <property type="entry name" value="MetRS_core"/>
</dbReference>
<dbReference type="InterPro" id="IPR029038">
    <property type="entry name" value="MetRS_Zn"/>
</dbReference>
<dbReference type="InterPro" id="IPR012340">
    <property type="entry name" value="NA-bd_OB-fold"/>
</dbReference>
<dbReference type="InterPro" id="IPR014729">
    <property type="entry name" value="Rossmann-like_a/b/a_fold"/>
</dbReference>
<dbReference type="InterPro" id="IPR002547">
    <property type="entry name" value="tRNA-bd_dom"/>
</dbReference>
<dbReference type="InterPro" id="IPR009080">
    <property type="entry name" value="tRNAsynth_Ia_anticodon-bd"/>
</dbReference>
<dbReference type="NCBIfam" id="TIGR00398">
    <property type="entry name" value="metG"/>
    <property type="match status" value="1"/>
</dbReference>
<dbReference type="NCBIfam" id="TIGR00399">
    <property type="entry name" value="metG_C_term"/>
    <property type="match status" value="1"/>
</dbReference>
<dbReference type="NCBIfam" id="NF001100">
    <property type="entry name" value="PRK00133.1"/>
    <property type="match status" value="1"/>
</dbReference>
<dbReference type="PANTHER" id="PTHR45765">
    <property type="entry name" value="METHIONINE--TRNA LIGASE"/>
    <property type="match status" value="1"/>
</dbReference>
<dbReference type="PANTHER" id="PTHR45765:SF1">
    <property type="entry name" value="METHIONINE--TRNA LIGASE, CYTOPLASMIC"/>
    <property type="match status" value="1"/>
</dbReference>
<dbReference type="Pfam" id="PF19303">
    <property type="entry name" value="Anticodon_3"/>
    <property type="match status" value="1"/>
</dbReference>
<dbReference type="Pfam" id="PF09334">
    <property type="entry name" value="tRNA-synt_1g"/>
    <property type="match status" value="1"/>
</dbReference>
<dbReference type="Pfam" id="PF01588">
    <property type="entry name" value="tRNA_bind"/>
    <property type="match status" value="1"/>
</dbReference>
<dbReference type="PRINTS" id="PR01041">
    <property type="entry name" value="TRNASYNTHMET"/>
</dbReference>
<dbReference type="SUPFAM" id="SSF47323">
    <property type="entry name" value="Anticodon-binding domain of a subclass of class I aminoacyl-tRNA synthetases"/>
    <property type="match status" value="1"/>
</dbReference>
<dbReference type="SUPFAM" id="SSF57770">
    <property type="entry name" value="Methionyl-tRNA synthetase (MetRS), Zn-domain"/>
    <property type="match status" value="1"/>
</dbReference>
<dbReference type="SUPFAM" id="SSF50249">
    <property type="entry name" value="Nucleic acid-binding proteins"/>
    <property type="match status" value="1"/>
</dbReference>
<dbReference type="SUPFAM" id="SSF52374">
    <property type="entry name" value="Nucleotidylyl transferase"/>
    <property type="match status" value="1"/>
</dbReference>
<dbReference type="PROSITE" id="PS00178">
    <property type="entry name" value="AA_TRNA_LIGASE_I"/>
    <property type="match status" value="1"/>
</dbReference>
<dbReference type="PROSITE" id="PS50886">
    <property type="entry name" value="TRBD"/>
    <property type="match status" value="1"/>
</dbReference>
<keyword id="KW-0030">Aminoacyl-tRNA synthetase</keyword>
<keyword id="KW-0067">ATP-binding</keyword>
<keyword id="KW-0963">Cytoplasm</keyword>
<keyword id="KW-0436">Ligase</keyword>
<keyword id="KW-0479">Metal-binding</keyword>
<keyword id="KW-0547">Nucleotide-binding</keyword>
<keyword id="KW-0648">Protein biosynthesis</keyword>
<keyword id="KW-0694">RNA-binding</keyword>
<keyword id="KW-0820">tRNA-binding</keyword>
<keyword id="KW-0862">Zinc</keyword>